<name>HSLU_MARN8</name>
<protein>
    <recommendedName>
        <fullName evidence="1">ATP-dependent protease ATPase subunit HslU</fullName>
    </recommendedName>
    <alternativeName>
        <fullName evidence="1">Unfoldase HslU</fullName>
    </alternativeName>
</protein>
<comment type="function">
    <text evidence="1">ATPase subunit of a proteasome-like degradation complex; this subunit has chaperone activity. The binding of ATP and its subsequent hydrolysis by HslU are essential for unfolding of protein substrates subsequently hydrolyzed by HslV. HslU recognizes the N-terminal part of its protein substrates and unfolds these before they are guided to HslV for hydrolysis.</text>
</comment>
<comment type="subunit">
    <text evidence="1">A double ring-shaped homohexamer of HslV is capped on each side by a ring-shaped HslU homohexamer. The assembly of the HslU/HslV complex is dependent on binding of ATP.</text>
</comment>
<comment type="subcellular location">
    <subcellularLocation>
        <location evidence="1">Cytoplasm</location>
    </subcellularLocation>
</comment>
<comment type="similarity">
    <text evidence="1">Belongs to the ClpX chaperone family. HslU subfamily.</text>
</comment>
<evidence type="ECO:0000255" key="1">
    <source>
        <dbReference type="HAMAP-Rule" id="MF_00249"/>
    </source>
</evidence>
<evidence type="ECO:0000256" key="2">
    <source>
        <dbReference type="SAM" id="MobiDB-lite"/>
    </source>
</evidence>
<gene>
    <name evidence="1" type="primary">hslU</name>
    <name type="ordered locus">Maqu_0817</name>
</gene>
<reference key="1">
    <citation type="journal article" date="2011" name="Appl. Environ. Microbiol.">
        <title>Genomic potential of Marinobacter aquaeolei, a biogeochemical 'opportunitroph'.</title>
        <authorList>
            <person name="Singer E."/>
            <person name="Webb E.A."/>
            <person name="Nelson W.C."/>
            <person name="Heidelberg J.F."/>
            <person name="Ivanova N."/>
            <person name="Pati A."/>
            <person name="Edwards K.J."/>
        </authorList>
    </citation>
    <scope>NUCLEOTIDE SEQUENCE [LARGE SCALE GENOMIC DNA]</scope>
    <source>
        <strain>ATCC 700491 / DSM 11845 / VT8</strain>
    </source>
</reference>
<keyword id="KW-0067">ATP-binding</keyword>
<keyword id="KW-0143">Chaperone</keyword>
<keyword id="KW-0963">Cytoplasm</keyword>
<keyword id="KW-0547">Nucleotide-binding</keyword>
<keyword id="KW-0346">Stress response</keyword>
<organism>
    <name type="scientific">Marinobacter nauticus (strain ATCC 700491 / DSM 11845 / VT8)</name>
    <name type="common">Marinobacter aquaeolei</name>
    <dbReference type="NCBI Taxonomy" id="351348"/>
    <lineage>
        <taxon>Bacteria</taxon>
        <taxon>Pseudomonadati</taxon>
        <taxon>Pseudomonadota</taxon>
        <taxon>Gammaproteobacteria</taxon>
        <taxon>Pseudomonadales</taxon>
        <taxon>Marinobacteraceae</taxon>
        <taxon>Marinobacter</taxon>
    </lineage>
</organism>
<dbReference type="EMBL" id="CP000514">
    <property type="protein sequence ID" value="ABM17914.1"/>
    <property type="molecule type" value="Genomic_DNA"/>
</dbReference>
<dbReference type="RefSeq" id="WP_011784336.1">
    <property type="nucleotide sequence ID" value="NC_008740.1"/>
</dbReference>
<dbReference type="SMR" id="A1TYU5"/>
<dbReference type="STRING" id="351348.Maqu_0817"/>
<dbReference type="GeneID" id="31820194"/>
<dbReference type="KEGG" id="maq:Maqu_0817"/>
<dbReference type="eggNOG" id="COG1220">
    <property type="taxonomic scope" value="Bacteria"/>
</dbReference>
<dbReference type="HOGENOM" id="CLU_033123_0_0_6"/>
<dbReference type="OrthoDB" id="9804062at2"/>
<dbReference type="Proteomes" id="UP000000998">
    <property type="component" value="Chromosome"/>
</dbReference>
<dbReference type="GO" id="GO:0009376">
    <property type="term" value="C:HslUV protease complex"/>
    <property type="evidence" value="ECO:0007669"/>
    <property type="project" value="UniProtKB-UniRule"/>
</dbReference>
<dbReference type="GO" id="GO:0005524">
    <property type="term" value="F:ATP binding"/>
    <property type="evidence" value="ECO:0007669"/>
    <property type="project" value="UniProtKB-UniRule"/>
</dbReference>
<dbReference type="GO" id="GO:0016887">
    <property type="term" value="F:ATP hydrolysis activity"/>
    <property type="evidence" value="ECO:0007669"/>
    <property type="project" value="InterPro"/>
</dbReference>
<dbReference type="GO" id="GO:0008233">
    <property type="term" value="F:peptidase activity"/>
    <property type="evidence" value="ECO:0007669"/>
    <property type="project" value="InterPro"/>
</dbReference>
<dbReference type="GO" id="GO:0036402">
    <property type="term" value="F:proteasome-activating activity"/>
    <property type="evidence" value="ECO:0007669"/>
    <property type="project" value="UniProtKB-UniRule"/>
</dbReference>
<dbReference type="GO" id="GO:0043335">
    <property type="term" value="P:protein unfolding"/>
    <property type="evidence" value="ECO:0007669"/>
    <property type="project" value="UniProtKB-UniRule"/>
</dbReference>
<dbReference type="GO" id="GO:0051603">
    <property type="term" value="P:proteolysis involved in protein catabolic process"/>
    <property type="evidence" value="ECO:0007669"/>
    <property type="project" value="TreeGrafter"/>
</dbReference>
<dbReference type="CDD" id="cd19498">
    <property type="entry name" value="RecA-like_HslU"/>
    <property type="match status" value="1"/>
</dbReference>
<dbReference type="FunFam" id="1.10.8.10:FF:000028">
    <property type="entry name" value="ATP-dependent protease ATPase subunit HslU"/>
    <property type="match status" value="1"/>
</dbReference>
<dbReference type="FunFam" id="3.40.50.300:FF:000213">
    <property type="entry name" value="ATP-dependent protease ATPase subunit HslU"/>
    <property type="match status" value="1"/>
</dbReference>
<dbReference type="FunFam" id="3.40.50.300:FF:000220">
    <property type="entry name" value="ATP-dependent protease ATPase subunit HslU"/>
    <property type="match status" value="1"/>
</dbReference>
<dbReference type="Gene3D" id="1.10.8.60">
    <property type="match status" value="1"/>
</dbReference>
<dbReference type="Gene3D" id="3.40.50.300">
    <property type="entry name" value="P-loop containing nucleotide triphosphate hydrolases"/>
    <property type="match status" value="2"/>
</dbReference>
<dbReference type="HAMAP" id="MF_00249">
    <property type="entry name" value="HslU"/>
    <property type="match status" value="1"/>
</dbReference>
<dbReference type="InterPro" id="IPR003593">
    <property type="entry name" value="AAA+_ATPase"/>
</dbReference>
<dbReference type="InterPro" id="IPR050052">
    <property type="entry name" value="ATP-dep_Clp_protease_ClpX"/>
</dbReference>
<dbReference type="InterPro" id="IPR003959">
    <property type="entry name" value="ATPase_AAA_core"/>
</dbReference>
<dbReference type="InterPro" id="IPR019489">
    <property type="entry name" value="Clp_ATPase_C"/>
</dbReference>
<dbReference type="InterPro" id="IPR004491">
    <property type="entry name" value="HslU"/>
</dbReference>
<dbReference type="InterPro" id="IPR027417">
    <property type="entry name" value="P-loop_NTPase"/>
</dbReference>
<dbReference type="NCBIfam" id="TIGR00390">
    <property type="entry name" value="hslU"/>
    <property type="match status" value="1"/>
</dbReference>
<dbReference type="NCBIfam" id="NF003544">
    <property type="entry name" value="PRK05201.1"/>
    <property type="match status" value="1"/>
</dbReference>
<dbReference type="PANTHER" id="PTHR48102">
    <property type="entry name" value="ATP-DEPENDENT CLP PROTEASE ATP-BINDING SUBUNIT CLPX-LIKE, MITOCHONDRIAL-RELATED"/>
    <property type="match status" value="1"/>
</dbReference>
<dbReference type="PANTHER" id="PTHR48102:SF3">
    <property type="entry name" value="ATP-DEPENDENT PROTEASE ATPASE SUBUNIT HSLU"/>
    <property type="match status" value="1"/>
</dbReference>
<dbReference type="Pfam" id="PF00004">
    <property type="entry name" value="AAA"/>
    <property type="match status" value="1"/>
</dbReference>
<dbReference type="Pfam" id="PF07724">
    <property type="entry name" value="AAA_2"/>
    <property type="match status" value="1"/>
</dbReference>
<dbReference type="SMART" id="SM00382">
    <property type="entry name" value="AAA"/>
    <property type="match status" value="1"/>
</dbReference>
<dbReference type="SMART" id="SM01086">
    <property type="entry name" value="ClpB_D2-small"/>
    <property type="match status" value="1"/>
</dbReference>
<dbReference type="SUPFAM" id="SSF52540">
    <property type="entry name" value="P-loop containing nucleoside triphosphate hydrolases"/>
    <property type="match status" value="1"/>
</dbReference>
<proteinExistence type="inferred from homology"/>
<feature type="chain" id="PRO_1000119109" description="ATP-dependent protease ATPase subunit HslU">
    <location>
        <begin position="1"/>
        <end position="443"/>
    </location>
</feature>
<feature type="region of interest" description="Disordered" evidence="2">
    <location>
        <begin position="136"/>
        <end position="158"/>
    </location>
</feature>
<feature type="compositionally biased region" description="Polar residues" evidence="2">
    <location>
        <begin position="148"/>
        <end position="157"/>
    </location>
</feature>
<feature type="binding site" evidence="1">
    <location>
        <position position="18"/>
    </location>
    <ligand>
        <name>ATP</name>
        <dbReference type="ChEBI" id="CHEBI:30616"/>
    </ligand>
</feature>
<feature type="binding site" evidence="1">
    <location>
        <begin position="60"/>
        <end position="65"/>
    </location>
    <ligand>
        <name>ATP</name>
        <dbReference type="ChEBI" id="CHEBI:30616"/>
    </ligand>
</feature>
<feature type="binding site" evidence="1">
    <location>
        <position position="256"/>
    </location>
    <ligand>
        <name>ATP</name>
        <dbReference type="ChEBI" id="CHEBI:30616"/>
    </ligand>
</feature>
<feature type="binding site" evidence="1">
    <location>
        <position position="321"/>
    </location>
    <ligand>
        <name>ATP</name>
        <dbReference type="ChEBI" id="CHEBI:30616"/>
    </ligand>
</feature>
<feature type="binding site" evidence="1">
    <location>
        <position position="393"/>
    </location>
    <ligand>
        <name>ATP</name>
        <dbReference type="ChEBI" id="CHEBI:30616"/>
    </ligand>
</feature>
<sequence>MSAMTPREIVHELNKHIVGQEEAKRAVAIALRNRWRRMQLDSSLRDEITPKNILMIGPTGVGKTEIARRLAKLADAPFLKVEATKFTEVGYVGRDVESIIRDLADMAVKMLREQEMKRHEHRALDAAEDRILDALLPPPRDFNEDSQRTNADSSTRQLFRKKLREGELDDKEIEIDLRSSGAGVEIMAPPGMEEMTSQLQSMFSNLSSDKRKTRKMKVADAMKRVKDEEAAKLVNEEEIKQKAIQAVEQNGIVFIDEIDKVAKRSENTSSDVSREGVQRDLLPLIEGSTVSTKYGSIRTDHILFIASGAFHLSKPSDLIPELQGRLPIRVELQALTPDDFKRILTEPDASLVQQYEALMGTEGVKLTFADDAIARIAEVAYKVNETTENIGARRLHTVLERLLESLSYDAGDQVTDTFEVTADYVDEKLGELSEDEDLSRYIL</sequence>
<accession>A1TYU5</accession>